<evidence type="ECO:0000255" key="1">
    <source>
        <dbReference type="HAMAP-Rule" id="MF_00600"/>
    </source>
</evidence>
<evidence type="ECO:0000256" key="2">
    <source>
        <dbReference type="SAM" id="MobiDB-lite"/>
    </source>
</evidence>
<feature type="chain" id="PRO_0000332045" description="Chaperonin GroEL 2">
    <location>
        <begin position="1"/>
        <end position="564"/>
    </location>
</feature>
<feature type="region of interest" description="Disordered" evidence="2">
    <location>
        <begin position="521"/>
        <end position="541"/>
    </location>
</feature>
<feature type="compositionally biased region" description="Gly residues" evidence="2">
    <location>
        <begin position="530"/>
        <end position="541"/>
    </location>
</feature>
<feature type="binding site" evidence="1">
    <location>
        <begin position="29"/>
        <end position="32"/>
    </location>
    <ligand>
        <name>ATP</name>
        <dbReference type="ChEBI" id="CHEBI:30616"/>
    </ligand>
</feature>
<feature type="binding site" evidence="1">
    <location>
        <begin position="86"/>
        <end position="90"/>
    </location>
    <ligand>
        <name>ATP</name>
        <dbReference type="ChEBI" id="CHEBI:30616"/>
    </ligand>
</feature>
<feature type="binding site" evidence="1">
    <location>
        <position position="413"/>
    </location>
    <ligand>
        <name>ATP</name>
        <dbReference type="ChEBI" id="CHEBI:30616"/>
    </ligand>
</feature>
<feature type="binding site" evidence="1">
    <location>
        <position position="493"/>
    </location>
    <ligand>
        <name>ATP</name>
        <dbReference type="ChEBI" id="CHEBI:30616"/>
    </ligand>
</feature>
<protein>
    <recommendedName>
        <fullName evidence="1">Chaperonin GroEL 2</fullName>
        <ecNumber evidence="1">5.6.1.7</ecNumber>
    </recommendedName>
    <alternativeName>
        <fullName evidence="1">60 kDa chaperonin 2</fullName>
    </alternativeName>
    <alternativeName>
        <fullName evidence="1">Chaperonin-60 2</fullName>
        <shortName evidence="1">Cpn60 2</shortName>
    </alternativeName>
</protein>
<comment type="function">
    <text evidence="1">Together with its co-chaperonin GroES, plays an essential role in assisting protein folding. The GroEL-GroES system forms a nano-cage that allows encapsulation of the non-native substrate proteins and provides a physical environment optimized to promote and accelerate protein folding.</text>
</comment>
<comment type="catalytic activity">
    <reaction evidence="1">
        <text>ATP + H2O + a folded polypeptide = ADP + phosphate + an unfolded polypeptide.</text>
        <dbReference type="EC" id="5.6.1.7"/>
    </reaction>
</comment>
<comment type="subunit">
    <text evidence="1">Forms a cylinder of 14 subunits composed of two heptameric rings stacked back-to-back. Interacts with the co-chaperonin GroES.</text>
</comment>
<comment type="subcellular location">
    <subcellularLocation>
        <location evidence="1">Cytoplasm</location>
    </subcellularLocation>
</comment>
<comment type="similarity">
    <text evidence="1">Belongs to the chaperonin (HSP60) family.</text>
</comment>
<keyword id="KW-0067">ATP-binding</keyword>
<keyword id="KW-0143">Chaperone</keyword>
<keyword id="KW-0963">Cytoplasm</keyword>
<keyword id="KW-0413">Isomerase</keyword>
<keyword id="KW-0547">Nucleotide-binding</keyword>
<organism>
    <name type="scientific">Prochlorococcus marinus (strain MIT 9303)</name>
    <dbReference type="NCBI Taxonomy" id="59922"/>
    <lineage>
        <taxon>Bacteria</taxon>
        <taxon>Bacillati</taxon>
        <taxon>Cyanobacteriota</taxon>
        <taxon>Cyanophyceae</taxon>
        <taxon>Synechococcales</taxon>
        <taxon>Prochlorococcaceae</taxon>
        <taxon>Prochlorococcus</taxon>
    </lineage>
</organism>
<accession>A2C7E2</accession>
<proteinExistence type="inferred from homology"/>
<gene>
    <name evidence="1" type="primary">groEL2</name>
    <name evidence="1" type="synonym">groL2</name>
    <name type="ordered locus">P9303_06501</name>
</gene>
<reference key="1">
    <citation type="journal article" date="2007" name="PLoS Genet.">
        <title>Patterns and implications of gene gain and loss in the evolution of Prochlorococcus.</title>
        <authorList>
            <person name="Kettler G.C."/>
            <person name="Martiny A.C."/>
            <person name="Huang K."/>
            <person name="Zucker J."/>
            <person name="Coleman M.L."/>
            <person name="Rodrigue S."/>
            <person name="Chen F."/>
            <person name="Lapidus A."/>
            <person name="Ferriera S."/>
            <person name="Johnson J."/>
            <person name="Steglich C."/>
            <person name="Church G.M."/>
            <person name="Richardson P."/>
            <person name="Chisholm S.W."/>
        </authorList>
    </citation>
    <scope>NUCLEOTIDE SEQUENCE [LARGE SCALE GENOMIC DNA]</scope>
    <source>
        <strain>MIT 9303</strain>
    </source>
</reference>
<sequence>MAKLLSFSDDSRSALERGVNSLADAVRVTIGPRGRNVVLEKKFGAPDIVNDGVTIAKEIELDDPFENLGAKLIQQVASKTKDKAGDGTTTATVLAQAMVHEGLRNVAAGASPIELRRGMEKAVAQLVEELAQLSQAVGGNAIHQVATVSSGGDQEVGRMVSEAMDKVSADGVITVEESKSLATELEVTEGMAFDRGYSSPYFVTDADRQICEFENALLLLTDRKISSVSDLVPILESLQKSGSPLVIIAEEVEGEALATLVVNKNRGVLQVAAVRAPSFGDRRKAALADIAVLTGGTVISEDRAMTLEKVSQDDLGQVRRITISKDNTTIVAKDENRDAVNARVASIKRELDETDSEYDREKLNERIAKLAGGVAVIKVGAPTETELKNRKLRIEDALNATRAAVEEGIVAGGGTTLLRLSKGLRKLAEQQLNGDQRTGVEIVQRALSAPARQIAINAGENGDVVISEMQRLNKGFNAISSTYEDLLGAGILDATKVVRLALQDAVSIASMMVTTELVIADKPEPPAPAGDGGGDPMGGMGGMGGMGGMGGMGGMGGMGMPGMM</sequence>
<dbReference type="EC" id="5.6.1.7" evidence="1"/>
<dbReference type="EMBL" id="CP000554">
    <property type="protein sequence ID" value="ABM77402.1"/>
    <property type="molecule type" value="Genomic_DNA"/>
</dbReference>
<dbReference type="RefSeq" id="WP_011825321.1">
    <property type="nucleotide sequence ID" value="NC_008820.1"/>
</dbReference>
<dbReference type="SMR" id="A2C7E2"/>
<dbReference type="STRING" id="59922.P9303_06501"/>
<dbReference type="KEGG" id="pmf:P9303_06501"/>
<dbReference type="HOGENOM" id="CLU_016503_3_0_3"/>
<dbReference type="BioCyc" id="PMAR59922:G1G80-598-MONOMER"/>
<dbReference type="Proteomes" id="UP000002274">
    <property type="component" value="Chromosome"/>
</dbReference>
<dbReference type="GO" id="GO:0005737">
    <property type="term" value="C:cytoplasm"/>
    <property type="evidence" value="ECO:0007669"/>
    <property type="project" value="UniProtKB-SubCell"/>
</dbReference>
<dbReference type="GO" id="GO:0005524">
    <property type="term" value="F:ATP binding"/>
    <property type="evidence" value="ECO:0007669"/>
    <property type="project" value="UniProtKB-UniRule"/>
</dbReference>
<dbReference type="GO" id="GO:0140662">
    <property type="term" value="F:ATP-dependent protein folding chaperone"/>
    <property type="evidence" value="ECO:0007669"/>
    <property type="project" value="InterPro"/>
</dbReference>
<dbReference type="GO" id="GO:0016853">
    <property type="term" value="F:isomerase activity"/>
    <property type="evidence" value="ECO:0007669"/>
    <property type="project" value="UniProtKB-KW"/>
</dbReference>
<dbReference type="GO" id="GO:0051082">
    <property type="term" value="F:unfolded protein binding"/>
    <property type="evidence" value="ECO:0007669"/>
    <property type="project" value="UniProtKB-UniRule"/>
</dbReference>
<dbReference type="GO" id="GO:0042026">
    <property type="term" value="P:protein refolding"/>
    <property type="evidence" value="ECO:0007669"/>
    <property type="project" value="UniProtKB-UniRule"/>
</dbReference>
<dbReference type="CDD" id="cd03344">
    <property type="entry name" value="GroEL"/>
    <property type="match status" value="1"/>
</dbReference>
<dbReference type="FunFam" id="3.50.7.10:FF:000001">
    <property type="entry name" value="60 kDa chaperonin"/>
    <property type="match status" value="1"/>
</dbReference>
<dbReference type="Gene3D" id="3.50.7.10">
    <property type="entry name" value="GroEL"/>
    <property type="match status" value="1"/>
</dbReference>
<dbReference type="Gene3D" id="1.10.560.10">
    <property type="entry name" value="GroEL-like equatorial domain"/>
    <property type="match status" value="1"/>
</dbReference>
<dbReference type="Gene3D" id="3.30.260.10">
    <property type="entry name" value="TCP-1-like chaperonin intermediate domain"/>
    <property type="match status" value="1"/>
</dbReference>
<dbReference type="HAMAP" id="MF_00600">
    <property type="entry name" value="CH60"/>
    <property type="match status" value="1"/>
</dbReference>
<dbReference type="InterPro" id="IPR018370">
    <property type="entry name" value="Chaperonin_Cpn60_CS"/>
</dbReference>
<dbReference type="InterPro" id="IPR001844">
    <property type="entry name" value="Cpn60/GroEL"/>
</dbReference>
<dbReference type="InterPro" id="IPR002423">
    <property type="entry name" value="Cpn60/GroEL/TCP-1"/>
</dbReference>
<dbReference type="InterPro" id="IPR027409">
    <property type="entry name" value="GroEL-like_apical_dom_sf"/>
</dbReference>
<dbReference type="InterPro" id="IPR027413">
    <property type="entry name" value="GROEL-like_equatorial_sf"/>
</dbReference>
<dbReference type="InterPro" id="IPR027410">
    <property type="entry name" value="TCP-1-like_intermed_sf"/>
</dbReference>
<dbReference type="NCBIfam" id="TIGR02348">
    <property type="entry name" value="GroEL"/>
    <property type="match status" value="1"/>
</dbReference>
<dbReference type="NCBIfam" id="NF000592">
    <property type="entry name" value="PRK00013.1"/>
    <property type="match status" value="1"/>
</dbReference>
<dbReference type="NCBIfam" id="NF009487">
    <property type="entry name" value="PRK12849.1"/>
    <property type="match status" value="1"/>
</dbReference>
<dbReference type="NCBIfam" id="NF009488">
    <property type="entry name" value="PRK12850.1"/>
    <property type="match status" value="1"/>
</dbReference>
<dbReference type="NCBIfam" id="NF009489">
    <property type="entry name" value="PRK12851.1"/>
    <property type="match status" value="1"/>
</dbReference>
<dbReference type="PANTHER" id="PTHR45633">
    <property type="entry name" value="60 KDA HEAT SHOCK PROTEIN, MITOCHONDRIAL"/>
    <property type="match status" value="1"/>
</dbReference>
<dbReference type="Pfam" id="PF00118">
    <property type="entry name" value="Cpn60_TCP1"/>
    <property type="match status" value="1"/>
</dbReference>
<dbReference type="PRINTS" id="PR00298">
    <property type="entry name" value="CHAPERONIN60"/>
</dbReference>
<dbReference type="SUPFAM" id="SSF52029">
    <property type="entry name" value="GroEL apical domain-like"/>
    <property type="match status" value="1"/>
</dbReference>
<dbReference type="SUPFAM" id="SSF48592">
    <property type="entry name" value="GroEL equatorial domain-like"/>
    <property type="match status" value="1"/>
</dbReference>
<dbReference type="SUPFAM" id="SSF54849">
    <property type="entry name" value="GroEL-intermediate domain like"/>
    <property type="match status" value="1"/>
</dbReference>
<dbReference type="PROSITE" id="PS00296">
    <property type="entry name" value="CHAPERONINS_CPN60"/>
    <property type="match status" value="1"/>
</dbReference>
<name>CH602_PROM3</name>